<name>DB116_PANTR</name>
<sequence length="102" mass="11544">MSVMKPCLMTIAILMILAQKTPGGLFRSHNGKSREPWNPCELYQGMCRNACREYEIQYLTCPNDQKCCLKLSVKITSSKNVKEDYDSNSNLSVTNSSSYSHI</sequence>
<gene>
    <name type="primary">DEFB116</name>
</gene>
<evidence type="ECO:0000250" key="1"/>
<evidence type="ECO:0000255" key="2"/>
<evidence type="ECO:0000256" key="3">
    <source>
        <dbReference type="SAM" id="MobiDB-lite"/>
    </source>
</evidence>
<evidence type="ECO:0000305" key="4"/>
<dbReference type="EMBL" id="DQ012068">
    <property type="protein sequence ID" value="AAY59799.1"/>
    <property type="molecule type" value="mRNA"/>
</dbReference>
<dbReference type="RefSeq" id="NP_001073397.1">
    <property type="nucleotide sequence ID" value="NM_001079928.1"/>
</dbReference>
<dbReference type="SMR" id="Q30KL1"/>
<dbReference type="STRING" id="9598.ENSPTRP00000054753"/>
<dbReference type="PaxDb" id="9598-ENSPTRP00000054753"/>
<dbReference type="Ensembl" id="ENSPTRT00000062199.2">
    <property type="protein sequence ID" value="ENSPTRP00000054753.1"/>
    <property type="gene ID" value="ENSPTRG00000032541.2"/>
</dbReference>
<dbReference type="GeneID" id="746003"/>
<dbReference type="KEGG" id="ptr:746003"/>
<dbReference type="CTD" id="245930"/>
<dbReference type="VGNC" id="VGNC:6089">
    <property type="gene designation" value="DEFB116"/>
</dbReference>
<dbReference type="eggNOG" id="ENOG502TF8H">
    <property type="taxonomic scope" value="Eukaryota"/>
</dbReference>
<dbReference type="GeneTree" id="ENSGT00390000001502"/>
<dbReference type="HOGENOM" id="CLU_2482789_0_0_1"/>
<dbReference type="InParanoid" id="Q30KL1"/>
<dbReference type="OMA" id="PCLMTIV"/>
<dbReference type="OrthoDB" id="14662at9604"/>
<dbReference type="Proteomes" id="UP000002277">
    <property type="component" value="Chromosome 20"/>
</dbReference>
<dbReference type="GO" id="GO:0005576">
    <property type="term" value="C:extracellular region"/>
    <property type="evidence" value="ECO:0007669"/>
    <property type="project" value="UniProtKB-SubCell"/>
</dbReference>
<dbReference type="GO" id="GO:0042742">
    <property type="term" value="P:defense response to bacterium"/>
    <property type="evidence" value="ECO:0007669"/>
    <property type="project" value="UniProtKB-KW"/>
</dbReference>
<dbReference type="GO" id="GO:0045087">
    <property type="term" value="P:innate immune response"/>
    <property type="evidence" value="ECO:0007669"/>
    <property type="project" value="InterPro"/>
</dbReference>
<dbReference type="InterPro" id="IPR025933">
    <property type="entry name" value="Beta_defensin_dom"/>
</dbReference>
<dbReference type="Pfam" id="PF13841">
    <property type="entry name" value="Defensin_beta_2"/>
    <property type="match status" value="1"/>
</dbReference>
<comment type="function">
    <text evidence="1">Has antibacterial activity.</text>
</comment>
<comment type="subcellular location">
    <subcellularLocation>
        <location evidence="1">Secreted</location>
    </subcellularLocation>
</comment>
<comment type="similarity">
    <text evidence="4">Belongs to the beta-defensin family.</text>
</comment>
<organism>
    <name type="scientific">Pan troglodytes</name>
    <name type="common">Chimpanzee</name>
    <dbReference type="NCBI Taxonomy" id="9598"/>
    <lineage>
        <taxon>Eukaryota</taxon>
        <taxon>Metazoa</taxon>
        <taxon>Chordata</taxon>
        <taxon>Craniata</taxon>
        <taxon>Vertebrata</taxon>
        <taxon>Euteleostomi</taxon>
        <taxon>Mammalia</taxon>
        <taxon>Eutheria</taxon>
        <taxon>Euarchontoglires</taxon>
        <taxon>Primates</taxon>
        <taxon>Haplorrhini</taxon>
        <taxon>Catarrhini</taxon>
        <taxon>Hominidae</taxon>
        <taxon>Pan</taxon>
    </lineage>
</organism>
<proteinExistence type="inferred from homology"/>
<protein>
    <recommendedName>
        <fullName>Beta-defensin 116</fullName>
    </recommendedName>
    <alternativeName>
        <fullName>Defensin, beta 116</fullName>
    </alternativeName>
</protein>
<keyword id="KW-0044">Antibiotic</keyword>
<keyword id="KW-0929">Antimicrobial</keyword>
<keyword id="KW-0211">Defensin</keyword>
<keyword id="KW-1015">Disulfide bond</keyword>
<keyword id="KW-1185">Reference proteome</keyword>
<keyword id="KW-0964">Secreted</keyword>
<keyword id="KW-0732">Signal</keyword>
<feature type="signal peptide" evidence="2">
    <location>
        <begin position="1"/>
        <end position="23"/>
    </location>
</feature>
<feature type="chain" id="PRO_0000045345" description="Beta-defensin 116">
    <location>
        <begin position="24"/>
        <end position="102"/>
    </location>
</feature>
<feature type="region of interest" description="Disordered" evidence="3">
    <location>
        <begin position="83"/>
        <end position="102"/>
    </location>
</feature>
<feature type="compositionally biased region" description="Low complexity" evidence="3">
    <location>
        <begin position="87"/>
        <end position="102"/>
    </location>
</feature>
<feature type="disulfide bond" evidence="1">
    <location>
        <begin position="40"/>
        <end position="67"/>
    </location>
</feature>
<feature type="disulfide bond" evidence="1">
    <location>
        <begin position="47"/>
        <end position="61"/>
    </location>
</feature>
<feature type="disulfide bond" evidence="1">
    <location>
        <begin position="51"/>
        <end position="68"/>
    </location>
</feature>
<accession>Q30KL1</accession>
<reference key="1">
    <citation type="journal article" date="2005" name="Physiol. Genomics">
        <title>Cross-species analysis of the mammalian beta-defensin gene family: presence of syntenic gene clusters and preferential expression in the male reproductive tract.</title>
        <authorList>
            <person name="Patil A.A."/>
            <person name="Cai Y."/>
            <person name="Sang Y."/>
            <person name="Blecha F."/>
            <person name="Zhang G."/>
        </authorList>
    </citation>
    <scope>NUCLEOTIDE SEQUENCE [MRNA]</scope>
</reference>